<dbReference type="EC" id="5.6.1.7" evidence="1"/>
<dbReference type="EMBL" id="CP000142">
    <property type="protein sequence ID" value="ABA90005.1"/>
    <property type="molecule type" value="Genomic_DNA"/>
</dbReference>
<dbReference type="RefSeq" id="WP_011342550.1">
    <property type="nucleotide sequence ID" value="NC_007498.2"/>
</dbReference>
<dbReference type="SMR" id="Q3A0V2"/>
<dbReference type="STRING" id="338963.Pcar_2770"/>
<dbReference type="KEGG" id="pca:Pcar_2770"/>
<dbReference type="eggNOG" id="COG0459">
    <property type="taxonomic scope" value="Bacteria"/>
</dbReference>
<dbReference type="HOGENOM" id="CLU_016503_3_0_7"/>
<dbReference type="OrthoDB" id="9766614at2"/>
<dbReference type="Proteomes" id="UP000002534">
    <property type="component" value="Chromosome"/>
</dbReference>
<dbReference type="GO" id="GO:0005737">
    <property type="term" value="C:cytoplasm"/>
    <property type="evidence" value="ECO:0007669"/>
    <property type="project" value="UniProtKB-SubCell"/>
</dbReference>
<dbReference type="GO" id="GO:0005524">
    <property type="term" value="F:ATP binding"/>
    <property type="evidence" value="ECO:0007669"/>
    <property type="project" value="UniProtKB-UniRule"/>
</dbReference>
<dbReference type="GO" id="GO:0140662">
    <property type="term" value="F:ATP-dependent protein folding chaperone"/>
    <property type="evidence" value="ECO:0007669"/>
    <property type="project" value="InterPro"/>
</dbReference>
<dbReference type="GO" id="GO:0016853">
    <property type="term" value="F:isomerase activity"/>
    <property type="evidence" value="ECO:0007669"/>
    <property type="project" value="UniProtKB-KW"/>
</dbReference>
<dbReference type="GO" id="GO:0051082">
    <property type="term" value="F:unfolded protein binding"/>
    <property type="evidence" value="ECO:0007669"/>
    <property type="project" value="UniProtKB-UniRule"/>
</dbReference>
<dbReference type="GO" id="GO:0042026">
    <property type="term" value="P:protein refolding"/>
    <property type="evidence" value="ECO:0007669"/>
    <property type="project" value="UniProtKB-UniRule"/>
</dbReference>
<dbReference type="CDD" id="cd03344">
    <property type="entry name" value="GroEL"/>
    <property type="match status" value="1"/>
</dbReference>
<dbReference type="FunFam" id="1.10.560.10:FF:000001">
    <property type="entry name" value="60 kDa chaperonin"/>
    <property type="match status" value="1"/>
</dbReference>
<dbReference type="FunFam" id="3.50.7.10:FF:000001">
    <property type="entry name" value="60 kDa chaperonin"/>
    <property type="match status" value="1"/>
</dbReference>
<dbReference type="Gene3D" id="3.50.7.10">
    <property type="entry name" value="GroEL"/>
    <property type="match status" value="1"/>
</dbReference>
<dbReference type="Gene3D" id="1.10.560.10">
    <property type="entry name" value="GroEL-like equatorial domain"/>
    <property type="match status" value="1"/>
</dbReference>
<dbReference type="Gene3D" id="3.30.260.10">
    <property type="entry name" value="TCP-1-like chaperonin intermediate domain"/>
    <property type="match status" value="1"/>
</dbReference>
<dbReference type="HAMAP" id="MF_00600">
    <property type="entry name" value="CH60"/>
    <property type="match status" value="1"/>
</dbReference>
<dbReference type="InterPro" id="IPR018370">
    <property type="entry name" value="Chaperonin_Cpn60_CS"/>
</dbReference>
<dbReference type="InterPro" id="IPR001844">
    <property type="entry name" value="Cpn60/GroEL"/>
</dbReference>
<dbReference type="InterPro" id="IPR002423">
    <property type="entry name" value="Cpn60/GroEL/TCP-1"/>
</dbReference>
<dbReference type="InterPro" id="IPR027409">
    <property type="entry name" value="GroEL-like_apical_dom_sf"/>
</dbReference>
<dbReference type="InterPro" id="IPR027413">
    <property type="entry name" value="GROEL-like_equatorial_sf"/>
</dbReference>
<dbReference type="InterPro" id="IPR027410">
    <property type="entry name" value="TCP-1-like_intermed_sf"/>
</dbReference>
<dbReference type="NCBIfam" id="TIGR02348">
    <property type="entry name" value="GroEL"/>
    <property type="match status" value="1"/>
</dbReference>
<dbReference type="NCBIfam" id="NF000592">
    <property type="entry name" value="PRK00013.1"/>
    <property type="match status" value="1"/>
</dbReference>
<dbReference type="NCBIfam" id="NF009487">
    <property type="entry name" value="PRK12849.1"/>
    <property type="match status" value="1"/>
</dbReference>
<dbReference type="NCBIfam" id="NF009488">
    <property type="entry name" value="PRK12850.1"/>
    <property type="match status" value="1"/>
</dbReference>
<dbReference type="NCBIfam" id="NF009489">
    <property type="entry name" value="PRK12851.1"/>
    <property type="match status" value="1"/>
</dbReference>
<dbReference type="PANTHER" id="PTHR45633">
    <property type="entry name" value="60 KDA HEAT SHOCK PROTEIN, MITOCHONDRIAL"/>
    <property type="match status" value="1"/>
</dbReference>
<dbReference type="Pfam" id="PF00118">
    <property type="entry name" value="Cpn60_TCP1"/>
    <property type="match status" value="1"/>
</dbReference>
<dbReference type="PRINTS" id="PR00298">
    <property type="entry name" value="CHAPERONIN60"/>
</dbReference>
<dbReference type="SUPFAM" id="SSF52029">
    <property type="entry name" value="GroEL apical domain-like"/>
    <property type="match status" value="1"/>
</dbReference>
<dbReference type="SUPFAM" id="SSF48592">
    <property type="entry name" value="GroEL equatorial domain-like"/>
    <property type="match status" value="1"/>
</dbReference>
<dbReference type="SUPFAM" id="SSF54849">
    <property type="entry name" value="GroEL-intermediate domain like"/>
    <property type="match status" value="1"/>
</dbReference>
<dbReference type="PROSITE" id="PS00296">
    <property type="entry name" value="CHAPERONINS_CPN60"/>
    <property type="match status" value="1"/>
</dbReference>
<keyword id="KW-0067">ATP-binding</keyword>
<keyword id="KW-0143">Chaperone</keyword>
<keyword id="KW-0963">Cytoplasm</keyword>
<keyword id="KW-0413">Isomerase</keyword>
<keyword id="KW-0547">Nucleotide-binding</keyword>
<keyword id="KW-1185">Reference proteome</keyword>
<organism>
    <name type="scientific">Syntrophotalea carbinolica (strain DSM 2380 / NBRC 103641 / GraBd1)</name>
    <name type="common">Pelobacter carbinolicus</name>
    <dbReference type="NCBI Taxonomy" id="338963"/>
    <lineage>
        <taxon>Bacteria</taxon>
        <taxon>Pseudomonadati</taxon>
        <taxon>Thermodesulfobacteriota</taxon>
        <taxon>Desulfuromonadia</taxon>
        <taxon>Desulfuromonadales</taxon>
        <taxon>Syntrophotaleaceae</taxon>
        <taxon>Syntrophotalea</taxon>
    </lineage>
</organism>
<protein>
    <recommendedName>
        <fullName evidence="1">Chaperonin GroEL</fullName>
        <ecNumber evidence="1">5.6.1.7</ecNumber>
    </recommendedName>
    <alternativeName>
        <fullName evidence="1">60 kDa chaperonin</fullName>
    </alternativeName>
    <alternativeName>
        <fullName evidence="1">Chaperonin-60</fullName>
        <shortName evidence="1">Cpn60</shortName>
    </alternativeName>
</protein>
<gene>
    <name evidence="1" type="primary">groEL</name>
    <name evidence="1" type="synonym">groL</name>
    <name type="ordered locus">Pcar_2770</name>
</gene>
<evidence type="ECO:0000255" key="1">
    <source>
        <dbReference type="HAMAP-Rule" id="MF_00600"/>
    </source>
</evidence>
<feature type="chain" id="PRO_0000256943" description="Chaperonin GroEL">
    <location>
        <begin position="1"/>
        <end position="551"/>
    </location>
</feature>
<feature type="binding site" evidence="1">
    <location>
        <begin position="30"/>
        <end position="33"/>
    </location>
    <ligand>
        <name>ATP</name>
        <dbReference type="ChEBI" id="CHEBI:30616"/>
    </ligand>
</feature>
<feature type="binding site" evidence="1">
    <location>
        <position position="51"/>
    </location>
    <ligand>
        <name>ATP</name>
        <dbReference type="ChEBI" id="CHEBI:30616"/>
    </ligand>
</feature>
<feature type="binding site" evidence="1">
    <location>
        <begin position="87"/>
        <end position="91"/>
    </location>
    <ligand>
        <name>ATP</name>
        <dbReference type="ChEBI" id="CHEBI:30616"/>
    </ligand>
</feature>
<feature type="binding site" evidence="1">
    <location>
        <position position="415"/>
    </location>
    <ligand>
        <name>ATP</name>
        <dbReference type="ChEBI" id="CHEBI:30616"/>
    </ligand>
</feature>
<feature type="binding site" evidence="1">
    <location>
        <begin position="478"/>
        <end position="480"/>
    </location>
    <ligand>
        <name>ATP</name>
        <dbReference type="ChEBI" id="CHEBI:30616"/>
    </ligand>
</feature>
<feature type="binding site" evidence="1">
    <location>
        <position position="494"/>
    </location>
    <ligand>
        <name>ATP</name>
        <dbReference type="ChEBI" id="CHEBI:30616"/>
    </ligand>
</feature>
<comment type="function">
    <text evidence="1">Together with its co-chaperonin GroES, plays an essential role in assisting protein folding. The GroEL-GroES system forms a nano-cage that allows encapsulation of the non-native substrate proteins and provides a physical environment optimized to promote and accelerate protein folding.</text>
</comment>
<comment type="catalytic activity">
    <reaction evidence="1">
        <text>ATP + H2O + a folded polypeptide = ADP + phosphate + an unfolded polypeptide.</text>
        <dbReference type="EC" id="5.6.1.7"/>
    </reaction>
</comment>
<comment type="subunit">
    <text evidence="1">Forms a cylinder of 14 subunits composed of two heptameric rings stacked back-to-back. Interacts with the co-chaperonin GroES.</text>
</comment>
<comment type="subcellular location">
    <subcellularLocation>
        <location evidence="1">Cytoplasm</location>
    </subcellularLocation>
</comment>
<comment type="similarity">
    <text evidence="1">Belongs to the chaperonin (HSP60) family.</text>
</comment>
<accession>Q3A0V2</accession>
<proteinExistence type="inferred from homology"/>
<sequence>MSAKEIKFGQDARSLILSGVNQLADAVKVTLGPKGRNVVIDRSFGAPLITKDGVSVAKEIELEEKFENMGAQLVKEVASKTSDVAGDGTTTATVLAQGIYREGVKLVTAGHNPMEIKRGIDKAVEAAVAYLQELSKPIKDHKEIAQVGTISANSDKTIGDIIAEAMEKVGKEGVITVEEAKAMETSLETVEGMQFDRGYLSPYFVTDAERMEAVMEDAMILIHDKKISNMRDMINILEAVAKQGRPLLIIAEDIEGEALATLVVNRLRGTLNVAAVKAPGFGDRRKAMLEDIAILTGGKVISEEVGFKLENATIDMLGNAKRIVIDKENSTIIDGAGSEVDIQGRVKQIRAQIEETKSDYDREKLQERLAKLVGGVAVVKVGAATETEMKEKKARVEDALHATRAAVEEGIVPGGGVALIRCIKAIESLDLPGEQNWGVNIVKRAMEEPLRQISANAGAEGSIVVNQVRGGADTYGFNAAADEYCDMIEAGIIDPTKVVRSALQNASSVAGLMLTTEACIAELPKEEAGGGMPGGMPGGMPGGMGGMGGMM</sequence>
<reference key="1">
    <citation type="submission" date="2005-10" db="EMBL/GenBank/DDBJ databases">
        <title>Complete sequence of Pelobacter carbinolicus DSM 2380.</title>
        <authorList>
            <person name="Copeland A."/>
            <person name="Lucas S."/>
            <person name="Lapidus A."/>
            <person name="Barry K."/>
            <person name="Detter J.C."/>
            <person name="Glavina T."/>
            <person name="Hammon N."/>
            <person name="Israni S."/>
            <person name="Pitluck S."/>
            <person name="Chertkov O."/>
            <person name="Schmutz J."/>
            <person name="Larimer F."/>
            <person name="Land M."/>
            <person name="Kyrpides N."/>
            <person name="Ivanova N."/>
            <person name="Richardson P."/>
        </authorList>
    </citation>
    <scope>NUCLEOTIDE SEQUENCE [LARGE SCALE GENOMIC DNA]</scope>
    <source>
        <strain>DSM 2380 / NBRC 103641 / GraBd1</strain>
    </source>
</reference>
<name>CH60_SYNC1</name>